<gene>
    <name type="primary">dnaB</name>
    <name type="ordered locus">c5026</name>
</gene>
<reference key="1">
    <citation type="journal article" date="2002" name="Proc. Natl. Acad. Sci. U.S.A.">
        <title>Extensive mosaic structure revealed by the complete genome sequence of uropathogenic Escherichia coli.</title>
        <authorList>
            <person name="Welch R.A."/>
            <person name="Burland V."/>
            <person name="Plunkett G. III"/>
            <person name="Redford P."/>
            <person name="Roesch P."/>
            <person name="Rasko D."/>
            <person name="Buckles E.L."/>
            <person name="Liou S.-R."/>
            <person name="Boutin A."/>
            <person name="Hackett J."/>
            <person name="Stroud D."/>
            <person name="Mayhew G.F."/>
            <person name="Rose D.J."/>
            <person name="Zhou S."/>
            <person name="Schwartz D.C."/>
            <person name="Perna N.T."/>
            <person name="Mobley H.L.T."/>
            <person name="Donnenberg M.S."/>
            <person name="Blattner F.R."/>
        </authorList>
    </citation>
    <scope>NUCLEOTIDE SEQUENCE [LARGE SCALE GENOMIC DNA]</scope>
    <source>
        <strain>CFT073 / ATCC 700928 / UPEC</strain>
    </source>
</reference>
<feature type="chain" id="PRO_0000102021" description="Replicative DNA helicase DnaB">
    <location>
        <begin position="1"/>
        <end position="471"/>
    </location>
</feature>
<feature type="domain" description="SF4 helicase" evidence="2">
    <location>
        <begin position="200"/>
        <end position="467"/>
    </location>
</feature>
<feature type="region of interest" description="Disordered" evidence="3">
    <location>
        <begin position="1"/>
        <end position="26"/>
    </location>
</feature>
<feature type="binding site" evidence="2">
    <location>
        <begin position="231"/>
        <end position="238"/>
    </location>
    <ligand>
        <name>ATP</name>
        <dbReference type="ChEBI" id="CHEBI:30616"/>
    </ligand>
</feature>
<proteinExistence type="inferred from homology"/>
<dbReference type="EC" id="5.6.2.3" evidence="1"/>
<dbReference type="EMBL" id="AE014075">
    <property type="protein sequence ID" value="AAN83452.1"/>
    <property type="status" value="ALT_INIT"/>
    <property type="molecule type" value="Genomic_DNA"/>
</dbReference>
<dbReference type="RefSeq" id="WP_001296639.1">
    <property type="nucleotide sequence ID" value="NZ_CP051263.1"/>
</dbReference>
<dbReference type="BMRB" id="Q8FB22"/>
<dbReference type="SMR" id="Q8FB22"/>
<dbReference type="STRING" id="199310.c5026"/>
<dbReference type="KEGG" id="ecc:c5026"/>
<dbReference type="eggNOG" id="COG0305">
    <property type="taxonomic scope" value="Bacteria"/>
</dbReference>
<dbReference type="HOGENOM" id="CLU_005373_0_0_6"/>
<dbReference type="Proteomes" id="UP000001410">
    <property type="component" value="Chromosome"/>
</dbReference>
<dbReference type="GO" id="GO:0005829">
    <property type="term" value="C:cytosol"/>
    <property type="evidence" value="ECO:0007669"/>
    <property type="project" value="TreeGrafter"/>
</dbReference>
<dbReference type="GO" id="GO:1990077">
    <property type="term" value="C:primosome complex"/>
    <property type="evidence" value="ECO:0007669"/>
    <property type="project" value="UniProtKB-KW"/>
</dbReference>
<dbReference type="GO" id="GO:0005524">
    <property type="term" value="F:ATP binding"/>
    <property type="evidence" value="ECO:0007669"/>
    <property type="project" value="UniProtKB-KW"/>
</dbReference>
<dbReference type="GO" id="GO:0016887">
    <property type="term" value="F:ATP hydrolysis activity"/>
    <property type="evidence" value="ECO:0007669"/>
    <property type="project" value="InterPro"/>
</dbReference>
<dbReference type="GO" id="GO:0003677">
    <property type="term" value="F:DNA binding"/>
    <property type="evidence" value="ECO:0007669"/>
    <property type="project" value="UniProtKB-KW"/>
</dbReference>
<dbReference type="GO" id="GO:0003678">
    <property type="term" value="F:DNA helicase activity"/>
    <property type="evidence" value="ECO:0007669"/>
    <property type="project" value="InterPro"/>
</dbReference>
<dbReference type="GO" id="GO:0006269">
    <property type="term" value="P:DNA replication, synthesis of primer"/>
    <property type="evidence" value="ECO:0007669"/>
    <property type="project" value="UniProtKB-KW"/>
</dbReference>
<dbReference type="CDD" id="cd00984">
    <property type="entry name" value="DnaB_C"/>
    <property type="match status" value="1"/>
</dbReference>
<dbReference type="FunFam" id="1.10.860.10:FF:000002">
    <property type="entry name" value="Replicative DNA helicase"/>
    <property type="match status" value="1"/>
</dbReference>
<dbReference type="FunFam" id="3.40.50.300:FF:000076">
    <property type="entry name" value="Replicative DNA helicase"/>
    <property type="match status" value="1"/>
</dbReference>
<dbReference type="Gene3D" id="1.10.860.10">
    <property type="entry name" value="DNAb Helicase, Chain A"/>
    <property type="match status" value="1"/>
</dbReference>
<dbReference type="Gene3D" id="3.40.50.300">
    <property type="entry name" value="P-loop containing nucleotide triphosphate hydrolases"/>
    <property type="match status" value="1"/>
</dbReference>
<dbReference type="InterPro" id="IPR003593">
    <property type="entry name" value="AAA+_ATPase"/>
</dbReference>
<dbReference type="InterPro" id="IPR036185">
    <property type="entry name" value="DNA_heli_DnaB-like_N_sf"/>
</dbReference>
<dbReference type="InterPro" id="IPR007692">
    <property type="entry name" value="DNA_helicase_DnaB"/>
</dbReference>
<dbReference type="InterPro" id="IPR007694">
    <property type="entry name" value="DNA_helicase_DnaB-like_C"/>
</dbReference>
<dbReference type="InterPro" id="IPR007693">
    <property type="entry name" value="DNA_helicase_DnaB-like_N"/>
</dbReference>
<dbReference type="InterPro" id="IPR016136">
    <property type="entry name" value="DNA_helicase_N/primase_C"/>
</dbReference>
<dbReference type="InterPro" id="IPR027417">
    <property type="entry name" value="P-loop_NTPase"/>
</dbReference>
<dbReference type="NCBIfam" id="TIGR00665">
    <property type="entry name" value="DnaB"/>
    <property type="match status" value="1"/>
</dbReference>
<dbReference type="NCBIfam" id="NF004384">
    <property type="entry name" value="PRK05748.1"/>
    <property type="match status" value="1"/>
</dbReference>
<dbReference type="NCBIfam" id="NF005945">
    <property type="entry name" value="PRK08006.1"/>
    <property type="match status" value="1"/>
</dbReference>
<dbReference type="NCBIfam" id="NF006458">
    <property type="entry name" value="PRK08840.1"/>
    <property type="match status" value="1"/>
</dbReference>
<dbReference type="PANTHER" id="PTHR30153:SF2">
    <property type="entry name" value="REPLICATIVE DNA HELICASE"/>
    <property type="match status" value="1"/>
</dbReference>
<dbReference type="PANTHER" id="PTHR30153">
    <property type="entry name" value="REPLICATIVE DNA HELICASE DNAB"/>
    <property type="match status" value="1"/>
</dbReference>
<dbReference type="Pfam" id="PF00772">
    <property type="entry name" value="DnaB"/>
    <property type="match status" value="1"/>
</dbReference>
<dbReference type="Pfam" id="PF03796">
    <property type="entry name" value="DnaB_C"/>
    <property type="match status" value="1"/>
</dbReference>
<dbReference type="SMART" id="SM00382">
    <property type="entry name" value="AAA"/>
    <property type="match status" value="1"/>
</dbReference>
<dbReference type="SUPFAM" id="SSF48024">
    <property type="entry name" value="N-terminal domain of DnaB helicase"/>
    <property type="match status" value="1"/>
</dbReference>
<dbReference type="SUPFAM" id="SSF52540">
    <property type="entry name" value="P-loop containing nucleoside triphosphate hydrolases"/>
    <property type="match status" value="1"/>
</dbReference>
<dbReference type="PROSITE" id="PS51199">
    <property type="entry name" value="SF4_HELICASE"/>
    <property type="match status" value="1"/>
</dbReference>
<accession>Q8FB22</accession>
<protein>
    <recommendedName>
        <fullName>Replicative DNA helicase DnaB</fullName>
        <ecNumber evidence="1">5.6.2.3</ecNumber>
    </recommendedName>
    <alternativeName>
        <fullName evidence="4">DNA 5'-3' helicase DnaB</fullName>
    </alternativeName>
</protein>
<sequence length="471" mass="52451">MAGNRPFNKQQTDNRERDPQVAGLKVPPHSIEAEQSVLGGLMLDNERWDDVAERVVADDFYTRPHRHIFTEMARLQESGSPIDLITLAESLERQGQLDSVGGFAYLAELSKNTPSAANISAYADIVRERAVVREMISVANEIAEAGFDPQGRTSEDLLDLAESRVFKIAESRANKDEGPKNIADVLDATVARIEQLFQQPHDGVTGVNTGYDDLNKKTAGLQPSDLIIVAARPSMGKTTFAMNLVENAAMLQDKPVLIFSLEMPSEQIMMRSLASLSRVDQTKIRTGQLDDEDWARISGTMGILLEKRNIYIDDSSGLTPTEVRSRARRIAREHGGIGLIMIDYLQLMRVPALSDNRTLEIAEISRSLKALAKELNVPVVALSQLNRSLEQRADKRPVNSDLRESGSIEQDADLIMFIYRDEVYHENSDLKGIAEIIIGKQRNGPIGTVRLTFNGQWSRFDNYAGPQYDDE</sequence>
<comment type="function">
    <text evidence="1">The main replicative DNA helicase, it participates in initiation and elongation during chromosome replication. Travels ahead of the DNA replisome, separating dsDNA into templates for DNA synthesis. A processive ATP-dependent 5'-3' DNA helicase it has DNA-dependent ATPase activity.</text>
</comment>
<comment type="catalytic activity">
    <reaction evidence="1">
        <text>Couples ATP hydrolysis with the unwinding of duplex DNA at the replication fork by translocating in the 5'-3' direction. This creates two antiparallel DNA single strands (ssDNA). The leading ssDNA polymer is the template for DNA polymerase III holoenzyme which synthesizes a continuous strand.</text>
        <dbReference type="EC" id="5.6.2.3"/>
    </reaction>
</comment>
<comment type="catalytic activity">
    <reaction evidence="1">
        <text>ATP + H2O = ADP + phosphate + H(+)</text>
        <dbReference type="Rhea" id="RHEA:13065"/>
        <dbReference type="ChEBI" id="CHEBI:15377"/>
        <dbReference type="ChEBI" id="CHEBI:15378"/>
        <dbReference type="ChEBI" id="CHEBI:30616"/>
        <dbReference type="ChEBI" id="CHEBI:43474"/>
        <dbReference type="ChEBI" id="CHEBI:456216"/>
        <dbReference type="EC" id="5.6.2.3"/>
    </reaction>
</comment>
<comment type="subunit">
    <text evidence="1">Homohexamer.</text>
</comment>
<comment type="similarity">
    <text evidence="4">Belongs to the helicase family. DnaB subfamily.</text>
</comment>
<comment type="sequence caution" evidence="4">
    <conflict type="erroneous initiation">
        <sequence resource="EMBL-CDS" id="AAN83452"/>
    </conflict>
    <text>Extended N-terminus.</text>
</comment>
<keyword id="KW-0067">ATP-binding</keyword>
<keyword id="KW-0235">DNA replication</keyword>
<keyword id="KW-0238">DNA-binding</keyword>
<keyword id="KW-0347">Helicase</keyword>
<keyword id="KW-0378">Hydrolase</keyword>
<keyword id="KW-0413">Isomerase</keyword>
<keyword id="KW-0547">Nucleotide-binding</keyword>
<keyword id="KW-0639">Primosome</keyword>
<keyword id="KW-1185">Reference proteome</keyword>
<name>DNAB_ECOL6</name>
<organism>
    <name type="scientific">Escherichia coli O6:H1 (strain CFT073 / ATCC 700928 / UPEC)</name>
    <dbReference type="NCBI Taxonomy" id="199310"/>
    <lineage>
        <taxon>Bacteria</taxon>
        <taxon>Pseudomonadati</taxon>
        <taxon>Pseudomonadota</taxon>
        <taxon>Gammaproteobacteria</taxon>
        <taxon>Enterobacterales</taxon>
        <taxon>Enterobacteriaceae</taxon>
        <taxon>Escherichia</taxon>
    </lineage>
</organism>
<evidence type="ECO:0000250" key="1">
    <source>
        <dbReference type="UniProtKB" id="P0ACB0"/>
    </source>
</evidence>
<evidence type="ECO:0000255" key="2">
    <source>
        <dbReference type="PROSITE-ProRule" id="PRU00596"/>
    </source>
</evidence>
<evidence type="ECO:0000256" key="3">
    <source>
        <dbReference type="SAM" id="MobiDB-lite"/>
    </source>
</evidence>
<evidence type="ECO:0000305" key="4"/>